<name>TPIS_STRPD</name>
<feature type="chain" id="PRO_0000307575" description="Triosephosphate isomerase">
    <location>
        <begin position="1"/>
        <end position="252"/>
    </location>
</feature>
<feature type="active site" description="Electrophile" evidence="1">
    <location>
        <position position="96"/>
    </location>
</feature>
<feature type="active site" description="Proton acceptor" evidence="1">
    <location>
        <position position="168"/>
    </location>
</feature>
<feature type="binding site" evidence="1">
    <location>
        <begin position="10"/>
        <end position="12"/>
    </location>
    <ligand>
        <name>substrate</name>
    </ligand>
</feature>
<feature type="binding site" evidence="1">
    <location>
        <position position="174"/>
    </location>
    <ligand>
        <name>substrate</name>
    </ligand>
</feature>
<feature type="binding site" evidence="1">
    <location>
        <position position="214"/>
    </location>
    <ligand>
        <name>substrate</name>
    </ligand>
</feature>
<feature type="binding site" evidence="1">
    <location>
        <begin position="235"/>
        <end position="236"/>
    </location>
    <ligand>
        <name>substrate</name>
    </ligand>
</feature>
<comment type="function">
    <text evidence="1">Involved in the gluconeogenesis. Catalyzes stereospecifically the conversion of dihydroxyacetone phosphate (DHAP) to D-glyceraldehyde-3-phosphate (G3P).</text>
</comment>
<comment type="catalytic activity">
    <reaction evidence="1">
        <text>D-glyceraldehyde 3-phosphate = dihydroxyacetone phosphate</text>
        <dbReference type="Rhea" id="RHEA:18585"/>
        <dbReference type="ChEBI" id="CHEBI:57642"/>
        <dbReference type="ChEBI" id="CHEBI:59776"/>
        <dbReference type="EC" id="5.3.1.1"/>
    </reaction>
</comment>
<comment type="pathway">
    <text evidence="1">Carbohydrate biosynthesis; gluconeogenesis.</text>
</comment>
<comment type="pathway">
    <text evidence="1">Carbohydrate degradation; glycolysis; D-glyceraldehyde 3-phosphate from glycerone phosphate: step 1/1.</text>
</comment>
<comment type="subunit">
    <text evidence="1">Homodimer.</text>
</comment>
<comment type="subcellular location">
    <subcellularLocation>
        <location evidence="1">Cytoplasm</location>
    </subcellularLocation>
</comment>
<comment type="similarity">
    <text evidence="1">Belongs to the triosephosphate isomerase family.</text>
</comment>
<dbReference type="EC" id="5.3.1.1" evidence="1"/>
<dbReference type="EMBL" id="CP000260">
    <property type="protein sequence ID" value="ABF33568.1"/>
    <property type="molecule type" value="Genomic_DNA"/>
</dbReference>
<dbReference type="SMR" id="Q1JHV5"/>
<dbReference type="KEGG" id="sph:MGAS10270_Spy0503"/>
<dbReference type="HOGENOM" id="CLU_024251_2_3_9"/>
<dbReference type="UniPathway" id="UPA00109">
    <property type="reaction ID" value="UER00189"/>
</dbReference>
<dbReference type="UniPathway" id="UPA00138"/>
<dbReference type="Proteomes" id="UP000002436">
    <property type="component" value="Chromosome"/>
</dbReference>
<dbReference type="GO" id="GO:0005829">
    <property type="term" value="C:cytosol"/>
    <property type="evidence" value="ECO:0007669"/>
    <property type="project" value="TreeGrafter"/>
</dbReference>
<dbReference type="GO" id="GO:0004807">
    <property type="term" value="F:triose-phosphate isomerase activity"/>
    <property type="evidence" value="ECO:0007669"/>
    <property type="project" value="UniProtKB-UniRule"/>
</dbReference>
<dbReference type="GO" id="GO:0006094">
    <property type="term" value="P:gluconeogenesis"/>
    <property type="evidence" value="ECO:0007669"/>
    <property type="project" value="UniProtKB-UniRule"/>
</dbReference>
<dbReference type="GO" id="GO:0046166">
    <property type="term" value="P:glyceraldehyde-3-phosphate biosynthetic process"/>
    <property type="evidence" value="ECO:0007669"/>
    <property type="project" value="TreeGrafter"/>
</dbReference>
<dbReference type="GO" id="GO:0019563">
    <property type="term" value="P:glycerol catabolic process"/>
    <property type="evidence" value="ECO:0007669"/>
    <property type="project" value="TreeGrafter"/>
</dbReference>
<dbReference type="GO" id="GO:0006096">
    <property type="term" value="P:glycolytic process"/>
    <property type="evidence" value="ECO:0007669"/>
    <property type="project" value="UniProtKB-UniRule"/>
</dbReference>
<dbReference type="CDD" id="cd00311">
    <property type="entry name" value="TIM"/>
    <property type="match status" value="1"/>
</dbReference>
<dbReference type="FunFam" id="3.20.20.70:FF:000016">
    <property type="entry name" value="Triosephosphate isomerase"/>
    <property type="match status" value="1"/>
</dbReference>
<dbReference type="Gene3D" id="3.20.20.70">
    <property type="entry name" value="Aldolase class I"/>
    <property type="match status" value="1"/>
</dbReference>
<dbReference type="HAMAP" id="MF_00147_B">
    <property type="entry name" value="TIM_B"/>
    <property type="match status" value="1"/>
</dbReference>
<dbReference type="InterPro" id="IPR013785">
    <property type="entry name" value="Aldolase_TIM"/>
</dbReference>
<dbReference type="InterPro" id="IPR035990">
    <property type="entry name" value="TIM_sf"/>
</dbReference>
<dbReference type="InterPro" id="IPR022896">
    <property type="entry name" value="TrioseP_Isoase_bac/euk"/>
</dbReference>
<dbReference type="InterPro" id="IPR000652">
    <property type="entry name" value="Triosephosphate_isomerase"/>
</dbReference>
<dbReference type="InterPro" id="IPR020861">
    <property type="entry name" value="Triosephosphate_isomerase_AS"/>
</dbReference>
<dbReference type="NCBIfam" id="TIGR00419">
    <property type="entry name" value="tim"/>
    <property type="match status" value="1"/>
</dbReference>
<dbReference type="PANTHER" id="PTHR21139">
    <property type="entry name" value="TRIOSEPHOSPHATE ISOMERASE"/>
    <property type="match status" value="1"/>
</dbReference>
<dbReference type="PANTHER" id="PTHR21139:SF42">
    <property type="entry name" value="TRIOSEPHOSPHATE ISOMERASE"/>
    <property type="match status" value="1"/>
</dbReference>
<dbReference type="Pfam" id="PF00121">
    <property type="entry name" value="TIM"/>
    <property type="match status" value="1"/>
</dbReference>
<dbReference type="SUPFAM" id="SSF51351">
    <property type="entry name" value="Triosephosphate isomerase (TIM)"/>
    <property type="match status" value="1"/>
</dbReference>
<dbReference type="PROSITE" id="PS00171">
    <property type="entry name" value="TIM_1"/>
    <property type="match status" value="1"/>
</dbReference>
<dbReference type="PROSITE" id="PS51440">
    <property type="entry name" value="TIM_2"/>
    <property type="match status" value="1"/>
</dbReference>
<gene>
    <name evidence="1" type="primary">tpiA</name>
    <name type="ordered locus">MGAS10270_Spy0503</name>
</gene>
<proteinExistence type="inferred from homology"/>
<sequence>MSRKPIIAGNWKMNKNPQEAKAFVEAVASKLPSTDLVDVAVAAPAVDLVTTIESAKDSVLKVAAQNCYFENTGAFTGETSPKVLAEMGADYVVIGHSERRDYFHETDEDINKKAKAIFANGLTPIVCCGESLETYEAGKAVEFVGAQVSAALAGLSAEQVASLVLAYEPIWAIGTGKSATQDDAQNMCKAVRDVVAADFGQEVADKVRVQYGGSVKPENVKDYMACPDVDGALVGGASLEADSFLALLDFLN</sequence>
<evidence type="ECO:0000255" key="1">
    <source>
        <dbReference type="HAMAP-Rule" id="MF_00147"/>
    </source>
</evidence>
<keyword id="KW-0963">Cytoplasm</keyword>
<keyword id="KW-0312">Gluconeogenesis</keyword>
<keyword id="KW-0324">Glycolysis</keyword>
<keyword id="KW-0413">Isomerase</keyword>
<organism>
    <name type="scientific">Streptococcus pyogenes serotype M2 (strain MGAS10270)</name>
    <dbReference type="NCBI Taxonomy" id="370552"/>
    <lineage>
        <taxon>Bacteria</taxon>
        <taxon>Bacillati</taxon>
        <taxon>Bacillota</taxon>
        <taxon>Bacilli</taxon>
        <taxon>Lactobacillales</taxon>
        <taxon>Streptococcaceae</taxon>
        <taxon>Streptococcus</taxon>
    </lineage>
</organism>
<reference key="1">
    <citation type="journal article" date="2006" name="Proc. Natl. Acad. Sci. U.S.A.">
        <title>Molecular genetic anatomy of inter- and intraserotype variation in the human bacterial pathogen group A Streptococcus.</title>
        <authorList>
            <person name="Beres S.B."/>
            <person name="Richter E.W."/>
            <person name="Nagiec M.J."/>
            <person name="Sumby P."/>
            <person name="Porcella S.F."/>
            <person name="DeLeo F.R."/>
            <person name="Musser J.M."/>
        </authorList>
    </citation>
    <scope>NUCLEOTIDE SEQUENCE [LARGE SCALE GENOMIC DNA]</scope>
    <source>
        <strain>MGAS10270</strain>
    </source>
</reference>
<accession>Q1JHV5</accession>
<protein>
    <recommendedName>
        <fullName evidence="1">Triosephosphate isomerase</fullName>
        <shortName evidence="1">TIM</shortName>
        <shortName evidence="1">TPI</shortName>
        <ecNumber evidence="1">5.3.1.1</ecNumber>
    </recommendedName>
    <alternativeName>
        <fullName evidence="1">Triose-phosphate isomerase</fullName>
    </alternativeName>
</protein>